<reference key="1">
    <citation type="journal article" date="2002" name="Proc. Natl. Acad. Sci. U.S.A.">
        <title>Complete genome sequence and comparative genomic analysis of an emerging human pathogen, serotype V Streptococcus agalactiae.</title>
        <authorList>
            <person name="Tettelin H."/>
            <person name="Masignani V."/>
            <person name="Cieslewicz M.J."/>
            <person name="Eisen J.A."/>
            <person name="Peterson S.N."/>
            <person name="Wessels M.R."/>
            <person name="Paulsen I.T."/>
            <person name="Nelson K.E."/>
            <person name="Margarit I."/>
            <person name="Read T.D."/>
            <person name="Madoff L.C."/>
            <person name="Wolf A.M."/>
            <person name="Beanan M.J."/>
            <person name="Brinkac L.M."/>
            <person name="Daugherty S.C."/>
            <person name="DeBoy R.T."/>
            <person name="Durkin A.S."/>
            <person name="Kolonay J.F."/>
            <person name="Madupu R."/>
            <person name="Lewis M.R."/>
            <person name="Radune D."/>
            <person name="Fedorova N.B."/>
            <person name="Scanlan D."/>
            <person name="Khouri H.M."/>
            <person name="Mulligan S."/>
            <person name="Carty H.A."/>
            <person name="Cline R.T."/>
            <person name="Van Aken S.E."/>
            <person name="Gill J."/>
            <person name="Scarselli M."/>
            <person name="Mora M."/>
            <person name="Iacobini E.T."/>
            <person name="Brettoni C."/>
            <person name="Galli G."/>
            <person name="Mariani M."/>
            <person name="Vegni F."/>
            <person name="Maione D."/>
            <person name="Rinaudo D."/>
            <person name="Rappuoli R."/>
            <person name="Telford J.L."/>
            <person name="Kasper D.L."/>
            <person name="Grandi G."/>
            <person name="Fraser C.M."/>
        </authorList>
    </citation>
    <scope>NUCLEOTIDE SEQUENCE [LARGE SCALE GENOMIC DNA]</scope>
    <source>
        <strain>ATCC BAA-611 / 2603 V/R</strain>
    </source>
</reference>
<gene>
    <name evidence="1" type="primary">secA2</name>
    <name type="ordered locus">SAG1449</name>
</gene>
<dbReference type="EC" id="7.4.2.8" evidence="1"/>
<dbReference type="EMBL" id="AE009948">
    <property type="protein sequence ID" value="AAN00318.1"/>
    <property type="molecule type" value="Genomic_DNA"/>
</dbReference>
<dbReference type="RefSeq" id="NP_688445.1">
    <property type="nucleotide sequence ID" value="NC_004116.1"/>
</dbReference>
<dbReference type="RefSeq" id="WP_000560050.1">
    <property type="nucleotide sequence ID" value="NC_004116.1"/>
</dbReference>
<dbReference type="SMR" id="Q8DYM7"/>
<dbReference type="STRING" id="208435.SAG1449"/>
<dbReference type="KEGG" id="sag:SAG1449"/>
<dbReference type="PATRIC" id="fig|208435.3.peg.1457"/>
<dbReference type="HOGENOM" id="CLU_005314_3_2_9"/>
<dbReference type="OrthoDB" id="9762243at2"/>
<dbReference type="Proteomes" id="UP000000821">
    <property type="component" value="Chromosome"/>
</dbReference>
<dbReference type="GO" id="GO:0031522">
    <property type="term" value="C:cell envelope Sec protein transport complex"/>
    <property type="evidence" value="ECO:0007669"/>
    <property type="project" value="TreeGrafter"/>
</dbReference>
<dbReference type="GO" id="GO:0005829">
    <property type="term" value="C:cytosol"/>
    <property type="evidence" value="ECO:0007669"/>
    <property type="project" value="TreeGrafter"/>
</dbReference>
<dbReference type="GO" id="GO:0005886">
    <property type="term" value="C:plasma membrane"/>
    <property type="evidence" value="ECO:0007669"/>
    <property type="project" value="UniProtKB-SubCell"/>
</dbReference>
<dbReference type="GO" id="GO:0005524">
    <property type="term" value="F:ATP binding"/>
    <property type="evidence" value="ECO:0007669"/>
    <property type="project" value="UniProtKB-UniRule"/>
</dbReference>
<dbReference type="GO" id="GO:0008564">
    <property type="term" value="F:protein-exporting ATPase activity"/>
    <property type="evidence" value="ECO:0007669"/>
    <property type="project" value="UniProtKB-EC"/>
</dbReference>
<dbReference type="GO" id="GO:0065002">
    <property type="term" value="P:intracellular protein transmembrane transport"/>
    <property type="evidence" value="ECO:0007669"/>
    <property type="project" value="UniProtKB-UniRule"/>
</dbReference>
<dbReference type="GO" id="GO:0017038">
    <property type="term" value="P:protein import"/>
    <property type="evidence" value="ECO:0007669"/>
    <property type="project" value="InterPro"/>
</dbReference>
<dbReference type="GO" id="GO:0006605">
    <property type="term" value="P:protein targeting"/>
    <property type="evidence" value="ECO:0007669"/>
    <property type="project" value="UniProtKB-UniRule"/>
</dbReference>
<dbReference type="GO" id="GO:0043952">
    <property type="term" value="P:protein transport by the Sec complex"/>
    <property type="evidence" value="ECO:0007669"/>
    <property type="project" value="TreeGrafter"/>
</dbReference>
<dbReference type="CDD" id="cd17928">
    <property type="entry name" value="DEXDc_SecA"/>
    <property type="match status" value="1"/>
</dbReference>
<dbReference type="CDD" id="cd18803">
    <property type="entry name" value="SF2_C_secA"/>
    <property type="match status" value="1"/>
</dbReference>
<dbReference type="FunFam" id="3.40.50.300:FF:000429">
    <property type="entry name" value="Preprotein translocase subunit SecA"/>
    <property type="match status" value="1"/>
</dbReference>
<dbReference type="Gene3D" id="1.10.3060.10">
    <property type="entry name" value="Helical scaffold and wing domains of SecA"/>
    <property type="match status" value="1"/>
</dbReference>
<dbReference type="Gene3D" id="3.40.50.300">
    <property type="entry name" value="P-loop containing nucleotide triphosphate hydrolases"/>
    <property type="match status" value="2"/>
</dbReference>
<dbReference type="Gene3D" id="3.90.1440.10">
    <property type="entry name" value="SecA, preprotein cross-linking domain"/>
    <property type="match status" value="1"/>
</dbReference>
<dbReference type="HAMAP" id="MF_01382">
    <property type="entry name" value="SecA"/>
    <property type="match status" value="1"/>
</dbReference>
<dbReference type="InterPro" id="IPR014001">
    <property type="entry name" value="Helicase_ATP-bd"/>
</dbReference>
<dbReference type="InterPro" id="IPR001650">
    <property type="entry name" value="Helicase_C-like"/>
</dbReference>
<dbReference type="InterPro" id="IPR027417">
    <property type="entry name" value="P-loop_NTPase"/>
</dbReference>
<dbReference type="InterPro" id="IPR000185">
    <property type="entry name" value="SecA"/>
</dbReference>
<dbReference type="InterPro" id="IPR022490">
    <property type="entry name" value="SecA2"/>
</dbReference>
<dbReference type="InterPro" id="IPR020937">
    <property type="entry name" value="SecA_CS"/>
</dbReference>
<dbReference type="InterPro" id="IPR011115">
    <property type="entry name" value="SecA_DEAD"/>
</dbReference>
<dbReference type="InterPro" id="IPR014018">
    <property type="entry name" value="SecA_motor_DEAD"/>
</dbReference>
<dbReference type="InterPro" id="IPR011130">
    <property type="entry name" value="SecA_preprotein_X-link_dom"/>
</dbReference>
<dbReference type="InterPro" id="IPR044722">
    <property type="entry name" value="SecA_SF2_C"/>
</dbReference>
<dbReference type="InterPro" id="IPR011116">
    <property type="entry name" value="SecA_Wing/Scaffold"/>
</dbReference>
<dbReference type="InterPro" id="IPR036266">
    <property type="entry name" value="SecA_Wing/Scaffold_sf"/>
</dbReference>
<dbReference type="InterPro" id="IPR036670">
    <property type="entry name" value="SecA_X-link_sf"/>
</dbReference>
<dbReference type="NCBIfam" id="NF006630">
    <property type="entry name" value="PRK09200.1"/>
    <property type="match status" value="1"/>
</dbReference>
<dbReference type="NCBIfam" id="TIGR03714">
    <property type="entry name" value="secA2"/>
    <property type="match status" value="1"/>
</dbReference>
<dbReference type="PANTHER" id="PTHR30612:SF0">
    <property type="entry name" value="CHLOROPLAST PROTEIN-TRANSPORTING ATPASE"/>
    <property type="match status" value="1"/>
</dbReference>
<dbReference type="PANTHER" id="PTHR30612">
    <property type="entry name" value="SECA INNER MEMBRANE COMPONENT OF SEC PROTEIN SECRETION SYSTEM"/>
    <property type="match status" value="1"/>
</dbReference>
<dbReference type="Pfam" id="PF21090">
    <property type="entry name" value="P-loop_SecA"/>
    <property type="match status" value="2"/>
</dbReference>
<dbReference type="Pfam" id="PF07517">
    <property type="entry name" value="SecA_DEAD"/>
    <property type="match status" value="1"/>
</dbReference>
<dbReference type="Pfam" id="PF01043">
    <property type="entry name" value="SecA_PP_bind"/>
    <property type="match status" value="1"/>
</dbReference>
<dbReference type="Pfam" id="PF07516">
    <property type="entry name" value="SecA_SW"/>
    <property type="match status" value="1"/>
</dbReference>
<dbReference type="PRINTS" id="PR00906">
    <property type="entry name" value="SECA"/>
</dbReference>
<dbReference type="SMART" id="SM00957">
    <property type="entry name" value="SecA_DEAD"/>
    <property type="match status" value="1"/>
</dbReference>
<dbReference type="SMART" id="SM00958">
    <property type="entry name" value="SecA_PP_bind"/>
    <property type="match status" value="1"/>
</dbReference>
<dbReference type="SUPFAM" id="SSF81886">
    <property type="entry name" value="Helical scaffold and wing domains of SecA"/>
    <property type="match status" value="1"/>
</dbReference>
<dbReference type="SUPFAM" id="SSF52540">
    <property type="entry name" value="P-loop containing nucleoside triphosphate hydrolases"/>
    <property type="match status" value="2"/>
</dbReference>
<dbReference type="SUPFAM" id="SSF81767">
    <property type="entry name" value="Pre-protein crosslinking domain of SecA"/>
    <property type="match status" value="1"/>
</dbReference>
<dbReference type="PROSITE" id="PS01312">
    <property type="entry name" value="SECA"/>
    <property type="match status" value="1"/>
</dbReference>
<dbReference type="PROSITE" id="PS51196">
    <property type="entry name" value="SECA_MOTOR_DEAD"/>
    <property type="match status" value="1"/>
</dbReference>
<accession>Q8DYM7</accession>
<feature type="chain" id="PRO_0000318440" description="Protein translocase subunit SecA 2">
    <location>
        <begin position="1"/>
        <end position="795"/>
    </location>
</feature>
<feature type="binding site" evidence="1">
    <location>
        <position position="84"/>
    </location>
    <ligand>
        <name>ATP</name>
        <dbReference type="ChEBI" id="CHEBI:30616"/>
    </ligand>
</feature>
<feature type="binding site" evidence="1">
    <location>
        <begin position="102"/>
        <end position="106"/>
    </location>
    <ligand>
        <name>ATP</name>
        <dbReference type="ChEBI" id="CHEBI:30616"/>
    </ligand>
</feature>
<feature type="binding site" evidence="1">
    <location>
        <position position="496"/>
    </location>
    <ligand>
        <name>ATP</name>
        <dbReference type="ChEBI" id="CHEBI:30616"/>
    </ligand>
</feature>
<keyword id="KW-0067">ATP-binding</keyword>
<keyword id="KW-1003">Cell membrane</keyword>
<keyword id="KW-0963">Cytoplasm</keyword>
<keyword id="KW-0472">Membrane</keyword>
<keyword id="KW-0547">Nucleotide-binding</keyword>
<keyword id="KW-0653">Protein transport</keyword>
<keyword id="KW-1185">Reference proteome</keyword>
<keyword id="KW-1278">Translocase</keyword>
<keyword id="KW-0811">Translocation</keyword>
<keyword id="KW-0813">Transport</keyword>
<organism>
    <name type="scientific">Streptococcus agalactiae serotype V (strain ATCC BAA-611 / 2603 V/R)</name>
    <dbReference type="NCBI Taxonomy" id="208435"/>
    <lineage>
        <taxon>Bacteria</taxon>
        <taxon>Bacillati</taxon>
        <taxon>Bacillota</taxon>
        <taxon>Bacilli</taxon>
        <taxon>Lactobacillales</taxon>
        <taxon>Streptococcaceae</taxon>
        <taxon>Streptococcus</taxon>
    </lineage>
</organism>
<sequence length="795" mass="90178">MIAFNSLFSLDKKRLKKLQRTLNTINSLKGQMATLSNEELQAKTTEFRKRLVNGETLDDICAEAFAVVREADERVLGLFPYDVQVIGGLVLHQGNTAEMKTGEGKTLTATMPLYLNALEGKGAMLLTNNSYLAIRDAEEMGKVYRFLGLSVGVGVSDNEEEDRDAATKRAVYSSDIVYSTSSALGFDYLIDNLASSKSQKYMPKLHYAIVDEADAVLLDMAQTPLVISGSPRVQSNLYKIADELILSFEEQVDYYFDKERQEVWIKNQGVREAERYFRIPHFYKQSNRELVRHLNLSLKAHKLFERGKDYVVDDGEIKLLDATNGRVLEGTKLQGGVHQAIEQKEHLNVTPESRAMASITYQNLFRMFTKLAGMTGTGKTAEKEFIEVYDMEVVRIPTNSPVRRIDYPDKIYTTLPEKIHATIEFVKQVHDTGQPILLVAGSVRMSELFSELLLLSGIPHSLLNAQSAVKEAQMIAEAGQKGAVTVATNMAGRGTDIKLGKGVSELGGLAVIGTERMKSQRMDLQLRGRSGRQGDIGFSQFFVSFEDDLMIESGPKWAQDYFRKNRDKVNPEKPKALGQRRFQKLFQQTQEASDGKGESARSQTIEFDSSVQLQREYVYRERNALINGESGHFSPRQIIDTVISSFIAYLDGEVEKEELIFEVNRFIFDNMSYNLQGISKEMSLEEIKNYLFKIADEILREKHNLLGDSFGDFERTAALKAIDEAWIEEVDYLQQLRTVATARQTAQRNPVFEYHKEAYKSYNIMKKEIREQTFRNLLLSEVSFNENGDLQIYFI</sequence>
<proteinExistence type="inferred from homology"/>
<comment type="function">
    <text evidence="1">Part of the Sec protein translocase complex. Interacts with the SecYEG preprotein conducting channel. Has a central role in coupling the hydrolysis of ATP to the transfer of proteins into and across the cell membrane, serving as an ATP-driven molecular motor driving the stepwise translocation of polypeptide chains across the membrane.</text>
</comment>
<comment type="catalytic activity">
    <reaction evidence="1">
        <text>ATP + H2O + cellular proteinSide 1 = ADP + phosphate + cellular proteinSide 2.</text>
        <dbReference type="EC" id="7.4.2.8"/>
    </reaction>
</comment>
<comment type="subunit">
    <text evidence="1">Monomer and homodimer. Part of the essential Sec protein translocation apparatus which comprises SecA, SecYEG and auxiliary proteins SecDF. Other proteins may also be involved.</text>
</comment>
<comment type="subcellular location">
    <subcellularLocation>
        <location evidence="1">Cell membrane</location>
        <topology evidence="1">Peripheral membrane protein</topology>
        <orientation evidence="1">Cytoplasmic side</orientation>
    </subcellularLocation>
    <subcellularLocation>
        <location evidence="1">Cytoplasm</location>
    </subcellularLocation>
    <text evidence="1">Distribution is 50-50.</text>
</comment>
<comment type="similarity">
    <text evidence="1">Belongs to the SecA family.</text>
</comment>
<evidence type="ECO:0000255" key="1">
    <source>
        <dbReference type="HAMAP-Rule" id="MF_01382"/>
    </source>
</evidence>
<name>SECA2_STRA5</name>
<protein>
    <recommendedName>
        <fullName evidence="1">Protein translocase subunit SecA 2</fullName>
        <ecNumber evidence="1">7.4.2.8</ecNumber>
    </recommendedName>
</protein>